<dbReference type="EC" id="4.3.2.10" evidence="1"/>
<dbReference type="EC" id="3.5.1.2" evidence="1"/>
<dbReference type="EMBL" id="AE008692">
    <property type="protein sequence ID" value="AAV90126.2"/>
    <property type="molecule type" value="Genomic_DNA"/>
</dbReference>
<dbReference type="RefSeq" id="WP_011241275.1">
    <property type="nucleotide sequence ID" value="NZ_CP035711.1"/>
</dbReference>
<dbReference type="SMR" id="Q5NMD4"/>
<dbReference type="STRING" id="264203.ZMO1502"/>
<dbReference type="KEGG" id="zmo:ZMO1502"/>
<dbReference type="eggNOG" id="COG0118">
    <property type="taxonomic scope" value="Bacteria"/>
</dbReference>
<dbReference type="HOGENOM" id="CLU_071837_2_0_5"/>
<dbReference type="BRENDA" id="4.3.2.10">
    <property type="organism ID" value="6765"/>
</dbReference>
<dbReference type="UniPathway" id="UPA00031">
    <property type="reaction ID" value="UER00010"/>
</dbReference>
<dbReference type="Proteomes" id="UP000001173">
    <property type="component" value="Chromosome"/>
</dbReference>
<dbReference type="GO" id="GO:0005737">
    <property type="term" value="C:cytoplasm"/>
    <property type="evidence" value="ECO:0007669"/>
    <property type="project" value="UniProtKB-SubCell"/>
</dbReference>
<dbReference type="GO" id="GO:0004359">
    <property type="term" value="F:glutaminase activity"/>
    <property type="evidence" value="ECO:0007669"/>
    <property type="project" value="UniProtKB-EC"/>
</dbReference>
<dbReference type="GO" id="GO:0000107">
    <property type="term" value="F:imidazoleglycerol-phosphate synthase activity"/>
    <property type="evidence" value="ECO:0007669"/>
    <property type="project" value="UniProtKB-UniRule"/>
</dbReference>
<dbReference type="GO" id="GO:0016829">
    <property type="term" value="F:lyase activity"/>
    <property type="evidence" value="ECO:0007669"/>
    <property type="project" value="UniProtKB-KW"/>
</dbReference>
<dbReference type="GO" id="GO:0000105">
    <property type="term" value="P:L-histidine biosynthetic process"/>
    <property type="evidence" value="ECO:0007669"/>
    <property type="project" value="UniProtKB-UniRule"/>
</dbReference>
<dbReference type="CDD" id="cd01748">
    <property type="entry name" value="GATase1_IGP_Synthase"/>
    <property type="match status" value="1"/>
</dbReference>
<dbReference type="Gene3D" id="3.40.50.880">
    <property type="match status" value="1"/>
</dbReference>
<dbReference type="HAMAP" id="MF_00278">
    <property type="entry name" value="HisH"/>
    <property type="match status" value="1"/>
</dbReference>
<dbReference type="InterPro" id="IPR029062">
    <property type="entry name" value="Class_I_gatase-like"/>
</dbReference>
<dbReference type="InterPro" id="IPR017926">
    <property type="entry name" value="GATASE"/>
</dbReference>
<dbReference type="InterPro" id="IPR010139">
    <property type="entry name" value="Imidazole-glycPsynth_HisH"/>
</dbReference>
<dbReference type="NCBIfam" id="TIGR01855">
    <property type="entry name" value="IMP_synth_hisH"/>
    <property type="match status" value="1"/>
</dbReference>
<dbReference type="PANTHER" id="PTHR42701">
    <property type="entry name" value="IMIDAZOLE GLYCEROL PHOSPHATE SYNTHASE SUBUNIT HISH"/>
    <property type="match status" value="1"/>
</dbReference>
<dbReference type="PANTHER" id="PTHR42701:SF1">
    <property type="entry name" value="IMIDAZOLE GLYCEROL PHOSPHATE SYNTHASE SUBUNIT HISH"/>
    <property type="match status" value="1"/>
</dbReference>
<dbReference type="Pfam" id="PF00117">
    <property type="entry name" value="GATase"/>
    <property type="match status" value="1"/>
</dbReference>
<dbReference type="PIRSF" id="PIRSF000495">
    <property type="entry name" value="Amidotransf_hisH"/>
    <property type="match status" value="1"/>
</dbReference>
<dbReference type="SUPFAM" id="SSF52317">
    <property type="entry name" value="Class I glutamine amidotransferase-like"/>
    <property type="match status" value="1"/>
</dbReference>
<dbReference type="PROSITE" id="PS51273">
    <property type="entry name" value="GATASE_TYPE_1"/>
    <property type="match status" value="1"/>
</dbReference>
<sequence length="213" mass="22882">MKNQASSTVALIDYGAGNLRSVANALLASGLARENLVVTANPDEVLQADRVVLPGVGAFASCMQALKAIPDMVPALEKAVLEKGRPFLGICVGMQLLADQGEEYGVHQGLGWIKGKVTPLRPNDPSCKVPHMGWNQIGLTTDSHPLLRAGEAYFLHSYAFVPEDESTLLATTEHGGLVTAAVGRDNIMGVQFHPEKSQSYGLEFLSRFLDWNP</sequence>
<accession>Q5NMD4</accession>
<keyword id="KW-0028">Amino-acid biosynthesis</keyword>
<keyword id="KW-0963">Cytoplasm</keyword>
<keyword id="KW-0315">Glutamine amidotransferase</keyword>
<keyword id="KW-0368">Histidine biosynthesis</keyword>
<keyword id="KW-0378">Hydrolase</keyword>
<keyword id="KW-0456">Lyase</keyword>
<keyword id="KW-1185">Reference proteome</keyword>
<reference key="1">
    <citation type="journal article" date="2005" name="Nat. Biotechnol.">
        <title>The genome sequence of the ethanologenic bacterium Zymomonas mobilis ZM4.</title>
        <authorList>
            <person name="Seo J.-S."/>
            <person name="Chong H."/>
            <person name="Park H.S."/>
            <person name="Yoon K.-O."/>
            <person name="Jung C."/>
            <person name="Kim J.J."/>
            <person name="Hong J.H."/>
            <person name="Kim H."/>
            <person name="Kim J.-H."/>
            <person name="Kil J.-I."/>
            <person name="Park C.J."/>
            <person name="Oh H.-M."/>
            <person name="Lee J.-S."/>
            <person name="Jin S.-J."/>
            <person name="Um H.-W."/>
            <person name="Lee H.-J."/>
            <person name="Oh S.-J."/>
            <person name="Kim J.Y."/>
            <person name="Kang H.L."/>
            <person name="Lee S.Y."/>
            <person name="Lee K.J."/>
            <person name="Kang H.S."/>
        </authorList>
    </citation>
    <scope>NUCLEOTIDE SEQUENCE [LARGE SCALE GENOMIC DNA]</scope>
    <source>
        <strain>ATCC 31821 / ZM4 / CP4</strain>
    </source>
</reference>
<feature type="chain" id="PRO_0000231774" description="Imidazole glycerol phosphate synthase subunit HisH">
    <location>
        <begin position="1"/>
        <end position="213"/>
    </location>
</feature>
<feature type="domain" description="Glutamine amidotransferase type-1" evidence="1">
    <location>
        <begin position="8"/>
        <end position="213"/>
    </location>
</feature>
<feature type="active site" description="Nucleophile" evidence="1">
    <location>
        <position position="91"/>
    </location>
</feature>
<feature type="active site" evidence="1">
    <location>
        <position position="193"/>
    </location>
</feature>
<feature type="active site" evidence="1">
    <location>
        <position position="195"/>
    </location>
</feature>
<organism>
    <name type="scientific">Zymomonas mobilis subsp. mobilis (strain ATCC 31821 / ZM4 / CP4)</name>
    <dbReference type="NCBI Taxonomy" id="264203"/>
    <lineage>
        <taxon>Bacteria</taxon>
        <taxon>Pseudomonadati</taxon>
        <taxon>Pseudomonadota</taxon>
        <taxon>Alphaproteobacteria</taxon>
        <taxon>Sphingomonadales</taxon>
        <taxon>Zymomonadaceae</taxon>
        <taxon>Zymomonas</taxon>
    </lineage>
</organism>
<comment type="function">
    <text evidence="1">IGPS catalyzes the conversion of PRFAR and glutamine to IGP, AICAR and glutamate. The HisH subunit catalyzes the hydrolysis of glutamine to glutamate and ammonia as part of the synthesis of IGP and AICAR. The resulting ammonia molecule is channeled to the active site of HisF.</text>
</comment>
<comment type="catalytic activity">
    <reaction evidence="1">
        <text>5-[(5-phospho-1-deoxy-D-ribulos-1-ylimino)methylamino]-1-(5-phospho-beta-D-ribosyl)imidazole-4-carboxamide + L-glutamine = D-erythro-1-(imidazol-4-yl)glycerol 3-phosphate + 5-amino-1-(5-phospho-beta-D-ribosyl)imidazole-4-carboxamide + L-glutamate + H(+)</text>
        <dbReference type="Rhea" id="RHEA:24793"/>
        <dbReference type="ChEBI" id="CHEBI:15378"/>
        <dbReference type="ChEBI" id="CHEBI:29985"/>
        <dbReference type="ChEBI" id="CHEBI:58278"/>
        <dbReference type="ChEBI" id="CHEBI:58359"/>
        <dbReference type="ChEBI" id="CHEBI:58475"/>
        <dbReference type="ChEBI" id="CHEBI:58525"/>
        <dbReference type="EC" id="4.3.2.10"/>
    </reaction>
</comment>
<comment type="catalytic activity">
    <reaction evidence="1">
        <text>L-glutamine + H2O = L-glutamate + NH4(+)</text>
        <dbReference type="Rhea" id="RHEA:15889"/>
        <dbReference type="ChEBI" id="CHEBI:15377"/>
        <dbReference type="ChEBI" id="CHEBI:28938"/>
        <dbReference type="ChEBI" id="CHEBI:29985"/>
        <dbReference type="ChEBI" id="CHEBI:58359"/>
        <dbReference type="EC" id="3.5.1.2"/>
    </reaction>
</comment>
<comment type="pathway">
    <text evidence="1">Amino-acid biosynthesis; L-histidine biosynthesis; L-histidine from 5-phospho-alpha-D-ribose 1-diphosphate: step 5/9.</text>
</comment>
<comment type="subunit">
    <text evidence="1">Heterodimer of HisH and HisF.</text>
</comment>
<comment type="subcellular location">
    <subcellularLocation>
        <location evidence="1">Cytoplasm</location>
    </subcellularLocation>
</comment>
<protein>
    <recommendedName>
        <fullName evidence="1">Imidazole glycerol phosphate synthase subunit HisH</fullName>
        <ecNumber evidence="1">4.3.2.10</ecNumber>
    </recommendedName>
    <alternativeName>
        <fullName evidence="1">IGP synthase glutaminase subunit</fullName>
        <ecNumber evidence="1">3.5.1.2</ecNumber>
    </alternativeName>
    <alternativeName>
        <fullName evidence="1">IGP synthase subunit HisH</fullName>
    </alternativeName>
    <alternativeName>
        <fullName evidence="1">ImGP synthase subunit HisH</fullName>
        <shortName evidence="1">IGPS subunit HisH</shortName>
    </alternativeName>
</protein>
<name>HIS5_ZYMMO</name>
<gene>
    <name evidence="1" type="primary">hisH</name>
    <name type="ordered locus">ZMO1502</name>
</gene>
<proteinExistence type="inferred from homology"/>
<evidence type="ECO:0000255" key="1">
    <source>
        <dbReference type="HAMAP-Rule" id="MF_00278"/>
    </source>
</evidence>